<protein>
    <recommendedName>
        <fullName evidence="1">Single-stranded DNA-binding protein</fullName>
        <shortName evidence="1">SSB</shortName>
    </recommendedName>
</protein>
<name>SSB_LEPIC</name>
<accession>Q72UU3</accession>
<proteinExistence type="inferred from homology"/>
<gene>
    <name type="primary">ssb</name>
    <name type="ordered locus">LIC_10564</name>
</gene>
<evidence type="ECO:0000255" key="1">
    <source>
        <dbReference type="HAMAP-Rule" id="MF_00984"/>
    </source>
</evidence>
<keyword id="KW-0238">DNA-binding</keyword>
<feature type="chain" id="PRO_0000096055" description="Single-stranded DNA-binding protein">
    <location>
        <begin position="1"/>
        <end position="117"/>
    </location>
</feature>
<feature type="domain" description="SSB" evidence="1">
    <location>
        <begin position="1"/>
        <end position="107"/>
    </location>
</feature>
<reference key="1">
    <citation type="journal article" date="2004" name="J. Bacteriol.">
        <title>Comparative genomics of two Leptospira interrogans serovars reveals novel insights into physiology and pathogenesis.</title>
        <authorList>
            <person name="Nascimento A.L.T.O."/>
            <person name="Ko A.I."/>
            <person name="Martins E.A.L."/>
            <person name="Monteiro-Vitorello C.B."/>
            <person name="Ho P.L."/>
            <person name="Haake D.A."/>
            <person name="Verjovski-Almeida S."/>
            <person name="Hartskeerl R.A."/>
            <person name="Marques M.V."/>
            <person name="Oliveira M.C."/>
            <person name="Menck C.F.M."/>
            <person name="Leite L.C.C."/>
            <person name="Carrer H."/>
            <person name="Coutinho L.L."/>
            <person name="Degrave W.M."/>
            <person name="Dellagostin O.A."/>
            <person name="El-Dorry H."/>
            <person name="Ferro E.S."/>
            <person name="Ferro M.I.T."/>
            <person name="Furlan L.R."/>
            <person name="Gamberini M."/>
            <person name="Giglioti E.A."/>
            <person name="Goes-Neto A."/>
            <person name="Goldman G.H."/>
            <person name="Goldman M.H.S."/>
            <person name="Harakava R."/>
            <person name="Jeronimo S.M.B."/>
            <person name="Junqueira-de-Azevedo I.L.M."/>
            <person name="Kimura E.T."/>
            <person name="Kuramae E.E."/>
            <person name="Lemos E.G.M."/>
            <person name="Lemos M.V.F."/>
            <person name="Marino C.L."/>
            <person name="Nunes L.R."/>
            <person name="de Oliveira R.C."/>
            <person name="Pereira G.G."/>
            <person name="Reis M.S."/>
            <person name="Schriefer A."/>
            <person name="Siqueira W.J."/>
            <person name="Sommer P."/>
            <person name="Tsai S.M."/>
            <person name="Simpson A.J.G."/>
            <person name="Ferro J.A."/>
            <person name="Camargo L.E.A."/>
            <person name="Kitajima J.P."/>
            <person name="Setubal J.C."/>
            <person name="Van Sluys M.A."/>
        </authorList>
    </citation>
    <scope>NUCLEOTIDE SEQUENCE [LARGE SCALE GENOMIC DNA]</scope>
    <source>
        <strain>Fiocruz L1-130</strain>
    </source>
</reference>
<comment type="subunit">
    <text evidence="1">Homotetramer.</text>
</comment>
<sequence>MKNIAHIILDGNLTSDPEIKTLNSGKSVATFTLAVNHDYKSTLEEPGEVSFVEIELWDRQAVNAHEYLKKGKKATVIGELRQDRWKAQDGSNRSKLKVVGQMIRFDGLPGKKEREVA</sequence>
<organism>
    <name type="scientific">Leptospira interrogans serogroup Icterohaemorrhagiae serovar copenhageni (strain Fiocruz L1-130)</name>
    <dbReference type="NCBI Taxonomy" id="267671"/>
    <lineage>
        <taxon>Bacteria</taxon>
        <taxon>Pseudomonadati</taxon>
        <taxon>Spirochaetota</taxon>
        <taxon>Spirochaetia</taxon>
        <taxon>Leptospirales</taxon>
        <taxon>Leptospiraceae</taxon>
        <taxon>Leptospira</taxon>
    </lineage>
</organism>
<dbReference type="EMBL" id="AE016823">
    <property type="protein sequence ID" value="AAS69185.1"/>
    <property type="molecule type" value="Genomic_DNA"/>
</dbReference>
<dbReference type="RefSeq" id="WP_000788957.1">
    <property type="nucleotide sequence ID" value="NC_005823.1"/>
</dbReference>
<dbReference type="SMR" id="Q72UU3"/>
<dbReference type="KEGG" id="lic:LIC_10564"/>
<dbReference type="HOGENOM" id="CLU_078758_6_0_12"/>
<dbReference type="Proteomes" id="UP000007037">
    <property type="component" value="Chromosome I"/>
</dbReference>
<dbReference type="GO" id="GO:0009295">
    <property type="term" value="C:nucleoid"/>
    <property type="evidence" value="ECO:0007669"/>
    <property type="project" value="TreeGrafter"/>
</dbReference>
<dbReference type="GO" id="GO:0003697">
    <property type="term" value="F:single-stranded DNA binding"/>
    <property type="evidence" value="ECO:0007669"/>
    <property type="project" value="UniProtKB-UniRule"/>
</dbReference>
<dbReference type="GO" id="GO:0006260">
    <property type="term" value="P:DNA replication"/>
    <property type="evidence" value="ECO:0007669"/>
    <property type="project" value="InterPro"/>
</dbReference>
<dbReference type="CDD" id="cd04496">
    <property type="entry name" value="SSB_OBF"/>
    <property type="match status" value="1"/>
</dbReference>
<dbReference type="FunFam" id="2.40.50.140:FF:000284">
    <property type="entry name" value="Single-stranded DNA-binding protein"/>
    <property type="match status" value="1"/>
</dbReference>
<dbReference type="Gene3D" id="2.40.50.140">
    <property type="entry name" value="Nucleic acid-binding proteins"/>
    <property type="match status" value="1"/>
</dbReference>
<dbReference type="HAMAP" id="MF_00984">
    <property type="entry name" value="SSB"/>
    <property type="match status" value="1"/>
</dbReference>
<dbReference type="InterPro" id="IPR012340">
    <property type="entry name" value="NA-bd_OB-fold"/>
</dbReference>
<dbReference type="InterPro" id="IPR000424">
    <property type="entry name" value="Primosome_PriB/ssb"/>
</dbReference>
<dbReference type="InterPro" id="IPR011344">
    <property type="entry name" value="ssDNA-bd"/>
</dbReference>
<dbReference type="NCBIfam" id="TIGR00621">
    <property type="entry name" value="ssb"/>
    <property type="match status" value="1"/>
</dbReference>
<dbReference type="PANTHER" id="PTHR10302">
    <property type="entry name" value="SINGLE-STRANDED DNA-BINDING PROTEIN"/>
    <property type="match status" value="1"/>
</dbReference>
<dbReference type="PANTHER" id="PTHR10302:SF27">
    <property type="entry name" value="SINGLE-STRANDED DNA-BINDING PROTEIN"/>
    <property type="match status" value="1"/>
</dbReference>
<dbReference type="Pfam" id="PF00436">
    <property type="entry name" value="SSB"/>
    <property type="match status" value="1"/>
</dbReference>
<dbReference type="PIRSF" id="PIRSF002070">
    <property type="entry name" value="SSB"/>
    <property type="match status" value="1"/>
</dbReference>
<dbReference type="SUPFAM" id="SSF50249">
    <property type="entry name" value="Nucleic acid-binding proteins"/>
    <property type="match status" value="1"/>
</dbReference>
<dbReference type="PROSITE" id="PS50935">
    <property type="entry name" value="SSB"/>
    <property type="match status" value="1"/>
</dbReference>